<accession>C3JY29</accession>
<comment type="function">
    <text evidence="1">Transfers the gamma-phosphate of ATP to the 4'-position of a tetraacyldisaccharide 1-phosphate intermediate (termed DS-1-P) to form tetraacyldisaccharide 1,4'-bis-phosphate (lipid IVA).</text>
</comment>
<comment type="catalytic activity">
    <reaction evidence="1">
        <text>a lipid A disaccharide + ATP = a lipid IVA + ADP + H(+)</text>
        <dbReference type="Rhea" id="RHEA:67840"/>
        <dbReference type="ChEBI" id="CHEBI:15378"/>
        <dbReference type="ChEBI" id="CHEBI:30616"/>
        <dbReference type="ChEBI" id="CHEBI:176343"/>
        <dbReference type="ChEBI" id="CHEBI:176425"/>
        <dbReference type="ChEBI" id="CHEBI:456216"/>
        <dbReference type="EC" id="2.7.1.130"/>
    </reaction>
</comment>
<comment type="pathway">
    <text evidence="1">Glycolipid biosynthesis; lipid IV(A) biosynthesis; lipid IV(A) from (3R)-3-hydroxytetradecanoyl-[acyl-carrier-protein] and UDP-N-acetyl-alpha-D-glucosamine: step 6/6.</text>
</comment>
<comment type="similarity">
    <text evidence="1">Belongs to the LpxK family.</text>
</comment>
<sequence>MAMSDRLLKAWYEGHPALALLRPLESLYRRVVQRKRTRFLAGEGEIYQSPVPVVVVGNITVGGTGKTPLILWLIEHCRRSGLRVGVVSRGYGAKPPQLPWRVEASHSADLAGDEPLLIVQRCGVPLMIDPDRSRAVKALLASETLDLILSDDGLQHYRLARDLELVLIDAARGLGNRRCLPAGPLREPVERLQSVDALLYNGAASDREDGFAFRLQPAALVNLQTGERQPVDHFAPGQQVHAVAGIGNPQRFFNTLETLHWQPISHAFADHAPYSAEVLNFTPSLPLVMTEKDAVKCRAFAQPDWWYLAVDALPSPAFVAWFDTQLMRLLPARLLP</sequence>
<reference key="1">
    <citation type="journal article" date="2009" name="Genome Biol.">
        <title>Genomic and genetic analyses of diversity and plant interactions of Pseudomonas fluorescens.</title>
        <authorList>
            <person name="Silby M.W."/>
            <person name="Cerdeno-Tarraga A.M."/>
            <person name="Vernikos G.S."/>
            <person name="Giddens S.R."/>
            <person name="Jackson R.W."/>
            <person name="Preston G.M."/>
            <person name="Zhang X.-X."/>
            <person name="Moon C.D."/>
            <person name="Gehrig S.M."/>
            <person name="Godfrey S.A.C."/>
            <person name="Knight C.G."/>
            <person name="Malone J.G."/>
            <person name="Robinson Z."/>
            <person name="Spiers A.J."/>
            <person name="Harris S."/>
            <person name="Challis G.L."/>
            <person name="Yaxley A.M."/>
            <person name="Harris D."/>
            <person name="Seeger K."/>
            <person name="Murphy L."/>
            <person name="Rutter S."/>
            <person name="Squares R."/>
            <person name="Quail M.A."/>
            <person name="Saunders E."/>
            <person name="Mavromatis K."/>
            <person name="Brettin T.S."/>
            <person name="Bentley S.D."/>
            <person name="Hothersall J."/>
            <person name="Stephens E."/>
            <person name="Thomas C.M."/>
            <person name="Parkhill J."/>
            <person name="Levy S.B."/>
            <person name="Rainey P.B."/>
            <person name="Thomson N.R."/>
        </authorList>
    </citation>
    <scope>NUCLEOTIDE SEQUENCE [LARGE SCALE GENOMIC DNA]</scope>
    <source>
        <strain>SBW25</strain>
    </source>
</reference>
<gene>
    <name evidence="1" type="primary">lpxK</name>
    <name type="ordered locus">PFLU_3772</name>
</gene>
<name>LPXK_PSEFS</name>
<proteinExistence type="inferred from homology"/>
<evidence type="ECO:0000255" key="1">
    <source>
        <dbReference type="HAMAP-Rule" id="MF_00409"/>
    </source>
</evidence>
<organism>
    <name type="scientific">Pseudomonas fluorescens (strain SBW25)</name>
    <dbReference type="NCBI Taxonomy" id="216595"/>
    <lineage>
        <taxon>Bacteria</taxon>
        <taxon>Pseudomonadati</taxon>
        <taxon>Pseudomonadota</taxon>
        <taxon>Gammaproteobacteria</taxon>
        <taxon>Pseudomonadales</taxon>
        <taxon>Pseudomonadaceae</taxon>
        <taxon>Pseudomonas</taxon>
    </lineage>
</organism>
<protein>
    <recommendedName>
        <fullName evidence="1">Tetraacyldisaccharide 4'-kinase</fullName>
        <ecNumber evidence="1">2.7.1.130</ecNumber>
    </recommendedName>
    <alternativeName>
        <fullName evidence="1">Lipid A 4'-kinase</fullName>
    </alternativeName>
</protein>
<keyword id="KW-0067">ATP-binding</keyword>
<keyword id="KW-0418">Kinase</keyword>
<keyword id="KW-0441">Lipid A biosynthesis</keyword>
<keyword id="KW-0444">Lipid biosynthesis</keyword>
<keyword id="KW-0443">Lipid metabolism</keyword>
<keyword id="KW-0547">Nucleotide-binding</keyword>
<keyword id="KW-0808">Transferase</keyword>
<feature type="chain" id="PRO_1000205972" description="Tetraacyldisaccharide 4'-kinase">
    <location>
        <begin position="1"/>
        <end position="336"/>
    </location>
</feature>
<feature type="binding site" evidence="1">
    <location>
        <begin position="60"/>
        <end position="67"/>
    </location>
    <ligand>
        <name>ATP</name>
        <dbReference type="ChEBI" id="CHEBI:30616"/>
    </ligand>
</feature>
<dbReference type="EC" id="2.7.1.130" evidence="1"/>
<dbReference type="EMBL" id="AM181176">
    <property type="protein sequence ID" value="CAY50058.1"/>
    <property type="molecule type" value="Genomic_DNA"/>
</dbReference>
<dbReference type="RefSeq" id="WP_012724909.1">
    <property type="nucleotide sequence ID" value="NC_012660.1"/>
</dbReference>
<dbReference type="SMR" id="C3JY29"/>
<dbReference type="STRING" id="294.SRM1_04123"/>
<dbReference type="PATRIC" id="fig|216595.4.peg.3917"/>
<dbReference type="eggNOG" id="COG1663">
    <property type="taxonomic scope" value="Bacteria"/>
</dbReference>
<dbReference type="HOGENOM" id="CLU_038816_2_0_6"/>
<dbReference type="OrthoDB" id="9766423at2"/>
<dbReference type="UniPathway" id="UPA00359">
    <property type="reaction ID" value="UER00482"/>
</dbReference>
<dbReference type="GO" id="GO:0005886">
    <property type="term" value="C:plasma membrane"/>
    <property type="evidence" value="ECO:0007669"/>
    <property type="project" value="TreeGrafter"/>
</dbReference>
<dbReference type="GO" id="GO:0005524">
    <property type="term" value="F:ATP binding"/>
    <property type="evidence" value="ECO:0007669"/>
    <property type="project" value="UniProtKB-UniRule"/>
</dbReference>
<dbReference type="GO" id="GO:0009029">
    <property type="term" value="F:tetraacyldisaccharide 4'-kinase activity"/>
    <property type="evidence" value="ECO:0007669"/>
    <property type="project" value="UniProtKB-UniRule"/>
</dbReference>
<dbReference type="GO" id="GO:0009245">
    <property type="term" value="P:lipid A biosynthetic process"/>
    <property type="evidence" value="ECO:0007669"/>
    <property type="project" value="UniProtKB-UniRule"/>
</dbReference>
<dbReference type="GO" id="GO:0009244">
    <property type="term" value="P:lipopolysaccharide core region biosynthetic process"/>
    <property type="evidence" value="ECO:0007669"/>
    <property type="project" value="TreeGrafter"/>
</dbReference>
<dbReference type="HAMAP" id="MF_00409">
    <property type="entry name" value="LpxK"/>
    <property type="match status" value="1"/>
</dbReference>
<dbReference type="InterPro" id="IPR003758">
    <property type="entry name" value="LpxK"/>
</dbReference>
<dbReference type="InterPro" id="IPR027417">
    <property type="entry name" value="P-loop_NTPase"/>
</dbReference>
<dbReference type="NCBIfam" id="TIGR00682">
    <property type="entry name" value="lpxK"/>
    <property type="match status" value="1"/>
</dbReference>
<dbReference type="PANTHER" id="PTHR42724">
    <property type="entry name" value="TETRAACYLDISACCHARIDE 4'-KINASE"/>
    <property type="match status" value="1"/>
</dbReference>
<dbReference type="PANTHER" id="PTHR42724:SF1">
    <property type="entry name" value="TETRAACYLDISACCHARIDE 4'-KINASE, MITOCHONDRIAL-RELATED"/>
    <property type="match status" value="1"/>
</dbReference>
<dbReference type="Pfam" id="PF02606">
    <property type="entry name" value="LpxK"/>
    <property type="match status" value="1"/>
</dbReference>
<dbReference type="SUPFAM" id="SSF52540">
    <property type="entry name" value="P-loop containing nucleoside triphosphate hydrolases"/>
    <property type="match status" value="1"/>
</dbReference>